<feature type="peptide" id="PRO_0000399461" description="Theta defensin subunit B" evidence="4">
    <location>
        <begin position="1"/>
        <end position="9"/>
    </location>
</feature>
<feature type="disulfide bond" description="Interchain (with C-2 in subunit A); in form PhTD-1" evidence="2">
    <location>
        <position position="2"/>
    </location>
</feature>
<feature type="disulfide bond" evidence="2">
    <location>
        <begin position="4"/>
        <end position="9"/>
    </location>
</feature>
<feature type="cross-link" description="Cyclopeptide (Arg-Cys) (interchain with C-9 in subunit A); in form PhTD-1" evidence="4">
    <location>
        <position position="1"/>
    </location>
</feature>
<feature type="cross-link" description="Cyclopeptide (Cys-Arg) (interchain with R-1 in subunit A); in form PhTD-1" evidence="4">
    <location>
        <position position="9"/>
    </location>
</feature>
<name>BTDB_PAPHA</name>
<organism>
    <name type="scientific">Papio hamadryas</name>
    <name type="common">Hamadryas baboon</name>
    <dbReference type="NCBI Taxonomy" id="9557"/>
    <lineage>
        <taxon>Eukaryota</taxon>
        <taxon>Metazoa</taxon>
        <taxon>Chordata</taxon>
        <taxon>Craniata</taxon>
        <taxon>Vertebrata</taxon>
        <taxon>Euteleostomi</taxon>
        <taxon>Mammalia</taxon>
        <taxon>Eutheria</taxon>
        <taxon>Euarchontoglires</taxon>
        <taxon>Primates</taxon>
        <taxon>Haplorrhini</taxon>
        <taxon>Catarrhini</taxon>
        <taxon>Cercopithecidae</taxon>
        <taxon>Cercopithecinae</taxon>
        <taxon>Papio</taxon>
    </lineage>
</organism>
<evidence type="ECO:0000250" key="1">
    <source>
        <dbReference type="UniProtKB" id="B6ULW5"/>
    </source>
</evidence>
<evidence type="ECO:0000250" key="2">
    <source>
        <dbReference type="UniProtKB" id="P82271"/>
    </source>
</evidence>
<evidence type="ECO:0000255" key="3"/>
<evidence type="ECO:0000269" key="4">
    <source>
    </source>
</evidence>
<evidence type="ECO:0000305" key="5"/>
<accession>P86723</accession>
<comment type="function">
    <text evidence="4">PhTD-1 has antimicrobial activity. In low salt conditions PhTD-1 has antibacterial activity against the Gram-negative bacterium E.coli ML35p (MIC=1.5 uM), the Gram-positive bacteria L.monocytogenes EGD (MIC=1.6 uM) and methicillin-resistant S.aureus ATCC 33591 (MIC=2.5 uM), and the fungus C.albicans 820 (MIC=1.6 uM). At high physiological salt concentrations the antimicrobial activity of PhTD-1 decreases slightly: E.coli ML35p (MIC=2.0 uM), L.monocytogenes EGD (MIC=1.7 uM), S.aureus ATCC 33591 (MIC=3.6 uM), and C.albicans 820 (MIC=6.5 uM).</text>
</comment>
<comment type="subunit">
    <text evidence="4">PhTD-1 is a cyclic heterodimer composed of subunits A and B; disulfide-linked.</text>
</comment>
<comment type="PTM">
    <text evidence="2 4">Forms a cyclic peptide with subunit A (PhTD-1). An additional intersubunit disulfide bond is formed.</text>
</comment>
<comment type="mass spectrometry">
    <text>PhTD-1, heterodimer, cyclized.</text>
</comment>
<comment type="similarity">
    <text evidence="3">Belongs to the alpha-defensin family. Theta subfamily.</text>
</comment>
<protein>
    <recommendedName>
        <fullName evidence="1">Theta defensin subunit B</fullName>
    </recommendedName>
</protein>
<proteinExistence type="evidence at protein level"/>
<dbReference type="GO" id="GO:0042742">
    <property type="term" value="P:defense response to bacterium"/>
    <property type="evidence" value="ECO:0007669"/>
    <property type="project" value="UniProtKB-KW"/>
</dbReference>
<dbReference type="GO" id="GO:0050832">
    <property type="term" value="P:defense response to fungus"/>
    <property type="evidence" value="ECO:0007669"/>
    <property type="project" value="UniProtKB-KW"/>
</dbReference>
<dbReference type="GO" id="GO:0031640">
    <property type="term" value="P:killing of cells of another organism"/>
    <property type="evidence" value="ECO:0007669"/>
    <property type="project" value="UniProtKB-KW"/>
</dbReference>
<keyword id="KW-0044">Antibiotic</keyword>
<keyword id="KW-0929">Antimicrobial</keyword>
<keyword id="KW-0211">Defensin</keyword>
<keyword id="KW-0903">Direct protein sequencing</keyword>
<keyword id="KW-1015">Disulfide bond</keyword>
<keyword id="KW-0295">Fungicide</keyword>
<reference evidence="5" key="1">
    <citation type="journal article" date="2010" name="Rapid Commun. Mass Spectrom.">
        <title>De novo sequencing of two new cyclic theta-defensins from baboon (Papio hamadryas) leukocytes by matrix-assisted laser desorption/ionization mass spectrometry.</title>
        <authorList>
            <person name="Stegemann C."/>
            <person name="Tsvetkova E.V."/>
            <person name="Aleshina G.M."/>
            <person name="Lehrer R.I."/>
            <person name="Kokryakov V.N."/>
            <person name="Hoffmann R."/>
        </authorList>
    </citation>
    <scope>PROTEIN SEQUENCE</scope>
    <scope>FUNCTION</scope>
    <scope>SUBUNIT</scope>
    <scope>MASS SPECTROMETRY</scope>
    <source>
        <tissue evidence="4">Leukocyte</tissue>
    </source>
</reference>
<sequence>RCVCRRGVC</sequence>